<comment type="function">
    <text evidence="3">O-methyltransferase participating in the biosynthesis of natural products derived from phenylethylamine, including mescaline, a natural hallucinogen potentially used in psychotherapeutic treatments (PubMed:38835170). Catalyzes the O-methylation of mescaline meta hydroxyl groups, using dopamine and 3,4-dihydroxy-5-methoxyphenethylamine as substrates (PubMed:38835170).</text>
</comment>
<comment type="catalytic activity">
    <reaction evidence="3">
        <text>dopamine + S-adenosyl-L-methionine = 3-methoxytyramine + S-adenosyl-L-homocysteine + H(+)</text>
        <dbReference type="Rhea" id="RHEA:72255"/>
        <dbReference type="ChEBI" id="CHEBI:15378"/>
        <dbReference type="ChEBI" id="CHEBI:57856"/>
        <dbReference type="ChEBI" id="CHEBI:59789"/>
        <dbReference type="ChEBI" id="CHEBI:59905"/>
        <dbReference type="ChEBI" id="CHEBI:192089"/>
    </reaction>
    <physiologicalReaction direction="left-to-right" evidence="3">
        <dbReference type="Rhea" id="RHEA:72256"/>
    </physiologicalReaction>
</comment>
<comment type="catalytic activity">
    <reaction evidence="3">
        <text>3,4-dihydroxy-5-methoxyphenethylamine + S-adenosyl-L-methionine = 4-hydroxy-3,5-dimethoxyphenethylamine + S-adenosyl-L-homocysteine + H(+)</text>
        <dbReference type="Rhea" id="RHEA:81043"/>
        <dbReference type="ChEBI" id="CHEBI:15378"/>
        <dbReference type="ChEBI" id="CHEBI:57856"/>
        <dbReference type="ChEBI" id="CHEBI:59789"/>
        <dbReference type="ChEBI" id="CHEBI:231763"/>
        <dbReference type="ChEBI" id="CHEBI:231768"/>
    </reaction>
    <physiologicalReaction direction="left-to-right" evidence="3">
        <dbReference type="Rhea" id="RHEA:81044"/>
    </physiologicalReaction>
</comment>
<comment type="pathway">
    <text evidence="3">Aromatic compound metabolism.</text>
</comment>
<comment type="pathway">
    <text evidence="3">Alkaloid biosynthesis.</text>
</comment>
<comment type="subunit">
    <text evidence="1">Homodimer.</text>
</comment>
<comment type="biotechnology">
    <text evidence="3">An heterologous biosynthetic pathway of mescaline is reconstructed in Nicotiana benthamiana plants and yeast cells expressing Lophophora williamsii genes TyDC2, CYP76AD131, OMT1 and OMT11, thus providing a sustainable production of phenylethylamine-derivated natural products.</text>
</comment>
<comment type="similarity">
    <text evidence="2">Belongs to the class I-like SAM-binding methyltransferase superfamily. Cation-independent O-methyltransferase family.</text>
</comment>
<accession>P0DXJ9</accession>
<keyword id="KW-0017">Alkaloid metabolism</keyword>
<keyword id="KW-0489">Methyltransferase</keyword>
<keyword id="KW-0949">S-adenosyl-L-methionine</keyword>
<keyword id="KW-0808">Transferase</keyword>
<organism>
    <name type="scientific">Lophophora williamsii</name>
    <name type="common">Peyote</name>
    <name type="synonym">Echinocactus williamsii</name>
    <dbReference type="NCBI Taxonomy" id="130138"/>
    <lineage>
        <taxon>Eukaryota</taxon>
        <taxon>Viridiplantae</taxon>
        <taxon>Streptophyta</taxon>
        <taxon>Embryophyta</taxon>
        <taxon>Tracheophyta</taxon>
        <taxon>Spermatophyta</taxon>
        <taxon>Magnoliopsida</taxon>
        <taxon>eudicotyledons</taxon>
        <taxon>Gunneridae</taxon>
        <taxon>Pentapetalae</taxon>
        <taxon>Caryophyllales</taxon>
        <taxon>Cactineae</taxon>
        <taxon>Cactaceae</taxon>
        <taxon>Cactoideae</taxon>
        <taxon>Cacteae</taxon>
        <taxon>Lophophora</taxon>
    </lineage>
</organism>
<protein>
    <recommendedName>
        <fullName evidence="4">O-methyltransferase 1</fullName>
        <shortName evidence="4">LwOMT1</shortName>
        <ecNumber evidence="2">2.1.1.-</ecNumber>
    </recommendedName>
</protein>
<feature type="chain" id="PRO_0000462558" description="O-methyltransferase 1">
    <location>
        <begin position="1"/>
        <end position="364"/>
    </location>
</feature>
<feature type="active site" description="Proton acceptor" evidence="2">
    <location>
        <position position="268"/>
    </location>
</feature>
<feature type="binding site" evidence="1">
    <location>
        <position position="183"/>
    </location>
    <ligand>
        <name>S-adenosyl-L-homocysteine</name>
        <dbReference type="ChEBI" id="CHEBI:57856"/>
    </ligand>
</feature>
<feature type="binding site" evidence="1">
    <location>
        <position position="207"/>
    </location>
    <ligand>
        <name>S-adenosyl-L-homocysteine</name>
        <dbReference type="ChEBI" id="CHEBI:57856"/>
    </ligand>
</feature>
<feature type="binding site" evidence="1">
    <location>
        <position position="230"/>
    </location>
    <ligand>
        <name>S-adenosyl-L-homocysteine</name>
        <dbReference type="ChEBI" id="CHEBI:57856"/>
    </ligand>
</feature>
<feature type="binding site" evidence="2">
    <location>
        <position position="230"/>
    </location>
    <ligand>
        <name>S-adenosyl-L-methionine</name>
        <dbReference type="ChEBI" id="CHEBI:59789"/>
    </ligand>
</feature>
<feature type="binding site" evidence="1">
    <location>
        <position position="250"/>
    </location>
    <ligand>
        <name>S-adenosyl-L-homocysteine</name>
        <dbReference type="ChEBI" id="CHEBI:57856"/>
    </ligand>
</feature>
<feature type="binding site" evidence="1">
    <location>
        <position position="264"/>
    </location>
    <ligand>
        <name>S-adenosyl-L-homocysteine</name>
        <dbReference type="ChEBI" id="CHEBI:57856"/>
    </ligand>
</feature>
<feature type="mutagenesis site" description="Impaired activity toward 3,4-dihydroxy-5-methoxyphenethylamine. Lost activity toward 3,4-dihydroxy-5-methoxyphenethylamine; when associated with A-269." evidence="3">
    <original>H</original>
    <variation>A</variation>
    <location>
        <position position="268"/>
    </location>
</feature>
<feature type="mutagenesis site" description="Reduced activity toward 3,4-dihydroxy-5-methoxyphenethylamine. Lost activity toward 3,4-dihydroxy-5-methoxyphenethylamine; when associated with A-268." evidence="3">
    <original>D</original>
    <variation>A</variation>
    <location>
        <position position="269"/>
    </location>
</feature>
<reference key="1">
    <citation type="journal article" date="2024" name="Mol. Plant">
        <title>The biosynthetic pathway of the hallucinogen mescaline and its heterologous reconstruction.</title>
        <authorList>
            <person name="Berman P."/>
            <person name="de Haro L.A."/>
            <person name="Cavaco A.-R."/>
            <person name="Panda S."/>
            <person name="Dong Y."/>
            <person name="Kuzmich N."/>
            <person name="Lichtenstein G."/>
            <person name="Peleg Y."/>
            <person name="Harat H."/>
            <person name="Jozwiak A."/>
            <person name="Cai J."/>
            <person name="Heinig U."/>
            <person name="Meir S."/>
            <person name="Rogachev I."/>
            <person name="Aharoni A."/>
        </authorList>
    </citation>
    <scope>NUCLEOTIDE SEQUENCE [MRNA]</scope>
    <scope>FUNCTION</scope>
    <scope>MUTAGENESIS OF HIS-268 AND ASP-269</scope>
    <scope>CATALYTIC ACTIVITY</scope>
    <scope>PATHWAY</scope>
    <scope>BIOTECHNOLOGY</scope>
    <source>
        <strain>cv. Rehovot 7</strain>
    </source>
</reference>
<dbReference type="EC" id="2.1.1.-" evidence="2"/>
<dbReference type="PROSITE" id="PS51683">
    <property type="entry name" value="SAM_OMT_II"/>
    <property type="match status" value="1"/>
</dbReference>
<evidence type="ECO:0000250" key="1">
    <source>
        <dbReference type="UniProtKB" id="A0A166U5H3"/>
    </source>
</evidence>
<evidence type="ECO:0000255" key="2">
    <source>
        <dbReference type="PROSITE-ProRule" id="PRU01020"/>
    </source>
</evidence>
<evidence type="ECO:0000269" key="3">
    <source>
    </source>
</evidence>
<evidence type="ECO:0000303" key="4">
    <source>
    </source>
</evidence>
<gene>
    <name evidence="4" type="primary">OMT1</name>
</gene>
<name>OMT1_LOPWI</name>
<sequence>MGSASGSAERTQMGEDEACSFAMTITSGSVPPMVLKAVIELDVLEIIKRAGPGAHLSPAEIAAQLPTTNPGAAAMLDRMLRLLASYDVLSYSLHTLPDGRVERLYGLAPVCQFLTNNEDGVTLSALSLMNQDKVLMESWYHLKDAVLDGGIPFNKAYGMTAFEYHGTDPRFNKVFNNGMSNHSTITMKKLLENYKGFEGVSTLVDVGGGTGATLNMIISKHPTIKGINFDLPHVIEDAPTYPGVEHIGGDMFVSVPKGDAIFMKWICHDWSDEHCLRFLKNCYAALADHGKVIVCEYILPVAPETNHAARTVFHVDAIMLAHNPGGKERTEQEFESLAKGAGFEGFRVACSAYGTKVMEFLKKN</sequence>
<proteinExistence type="evidence at protein level"/>